<evidence type="ECO:0000250" key="1"/>
<evidence type="ECO:0000255" key="2">
    <source>
        <dbReference type="HAMAP-Rule" id="MF_01175"/>
    </source>
</evidence>
<comment type="function">
    <text evidence="2">Folate-binding protein involved in regulating the level of ATP-DnaA and in the modification of some tRNAs. It is probably a key factor in regulatory networks that act via tRNA modification, such as initiation of chromosomal replication.</text>
</comment>
<comment type="subcellular location">
    <subcellularLocation>
        <location evidence="2">Cytoplasm</location>
    </subcellularLocation>
</comment>
<comment type="similarity">
    <text evidence="2">Belongs to the tRNA-modifying YgfZ family.</text>
</comment>
<reference key="1">
    <citation type="journal article" date="2005" name="Nucleic Acids Res.">
        <title>Genome dynamics and diversity of Shigella species, the etiologic agents of bacillary dysentery.</title>
        <authorList>
            <person name="Yang F."/>
            <person name="Yang J."/>
            <person name="Zhang X."/>
            <person name="Chen L."/>
            <person name="Jiang Y."/>
            <person name="Yan Y."/>
            <person name="Tang X."/>
            <person name="Wang J."/>
            <person name="Xiong Z."/>
            <person name="Dong J."/>
            <person name="Xue Y."/>
            <person name="Zhu Y."/>
            <person name="Xu X."/>
            <person name="Sun L."/>
            <person name="Chen S."/>
            <person name="Nie H."/>
            <person name="Peng J."/>
            <person name="Xu J."/>
            <person name="Wang Y."/>
            <person name="Yuan Z."/>
            <person name="Wen Y."/>
            <person name="Yao Z."/>
            <person name="Shen Y."/>
            <person name="Qiang B."/>
            <person name="Hou Y."/>
            <person name="Yu J."/>
            <person name="Jin Q."/>
        </authorList>
    </citation>
    <scope>NUCLEOTIDE SEQUENCE [LARGE SCALE GENOMIC DNA]</scope>
    <source>
        <strain>Sb227</strain>
    </source>
</reference>
<proteinExistence type="inferred from homology"/>
<name>YGFZ_SHIBS</name>
<gene>
    <name evidence="2" type="primary">ygfZ</name>
    <name type="ordered locus">SBO_3094</name>
</gene>
<protein>
    <recommendedName>
        <fullName evidence="2">tRNA-modifying protein YgfZ</fullName>
    </recommendedName>
</protein>
<feature type="initiator methionine" description="Removed" evidence="1">
    <location>
        <position position="1"/>
    </location>
</feature>
<feature type="chain" id="PRO_0000262899" description="tRNA-modifying protein YgfZ">
    <location>
        <begin position="2"/>
        <end position="326"/>
    </location>
</feature>
<feature type="binding site" evidence="2">
    <location>
        <position position="27"/>
    </location>
    <ligand>
        <name>folate</name>
        <dbReference type="ChEBI" id="CHEBI:62501"/>
    </ligand>
</feature>
<feature type="binding site" evidence="2">
    <location>
        <position position="189"/>
    </location>
    <ligand>
        <name>folate</name>
        <dbReference type="ChEBI" id="CHEBI:62501"/>
    </ligand>
</feature>
<keyword id="KW-0963">Cytoplasm</keyword>
<keyword id="KW-0290">Folate-binding</keyword>
<keyword id="KW-0819">tRNA processing</keyword>
<organism>
    <name type="scientific">Shigella boydii serotype 4 (strain Sb227)</name>
    <dbReference type="NCBI Taxonomy" id="300268"/>
    <lineage>
        <taxon>Bacteria</taxon>
        <taxon>Pseudomonadati</taxon>
        <taxon>Pseudomonadota</taxon>
        <taxon>Gammaproteobacteria</taxon>
        <taxon>Enterobacterales</taxon>
        <taxon>Enterobacteriaceae</taxon>
        <taxon>Shigella</taxon>
    </lineage>
</organism>
<sequence>MAFTPFPPRQPTASARLPLTLMTLDDWALATITGADSEKYMQGQVTADVSQMTENQHLLAAHCDAKGKMWSNLRLFRDGDGFAWIERRSVREPQLTELKKYAVFSKVTIAADDERVLLGVAGFQARAALANLFSELPSREKQVVKEGATTLLWFEHPAERFLIVTDEATANMLTDKLRGEAELNNSQQWLALNIEAGFPVIDAANSGQFIPQATNLQALGGISFKKGCYTGQEMVARAKFRGANKRALWLLAGSASRLPEAGEDLELKMGENWRRTGTVLAAVKLEDGQVVVQVVMNNDMEPDSIFRVRDDANTLHIEPLPYSLEE</sequence>
<dbReference type="EMBL" id="CP000036">
    <property type="protein sequence ID" value="ABB67598.1"/>
    <property type="molecule type" value="Genomic_DNA"/>
</dbReference>
<dbReference type="RefSeq" id="WP_000886094.1">
    <property type="nucleotide sequence ID" value="NC_007613.1"/>
</dbReference>
<dbReference type="SMR" id="Q31WG0"/>
<dbReference type="KEGG" id="sbo:SBO_3094"/>
<dbReference type="HOGENOM" id="CLU_007884_6_1_6"/>
<dbReference type="Proteomes" id="UP000007067">
    <property type="component" value="Chromosome"/>
</dbReference>
<dbReference type="GO" id="GO:0005737">
    <property type="term" value="C:cytoplasm"/>
    <property type="evidence" value="ECO:0007669"/>
    <property type="project" value="UniProtKB-SubCell"/>
</dbReference>
<dbReference type="GO" id="GO:0005542">
    <property type="term" value="F:folic acid binding"/>
    <property type="evidence" value="ECO:0007669"/>
    <property type="project" value="UniProtKB-UniRule"/>
</dbReference>
<dbReference type="GO" id="GO:0016226">
    <property type="term" value="P:iron-sulfur cluster assembly"/>
    <property type="evidence" value="ECO:0007669"/>
    <property type="project" value="TreeGrafter"/>
</dbReference>
<dbReference type="GO" id="GO:0009451">
    <property type="term" value="P:RNA modification"/>
    <property type="evidence" value="ECO:0007669"/>
    <property type="project" value="InterPro"/>
</dbReference>
<dbReference type="GO" id="GO:0008033">
    <property type="term" value="P:tRNA processing"/>
    <property type="evidence" value="ECO:0007669"/>
    <property type="project" value="UniProtKB-UniRule"/>
</dbReference>
<dbReference type="FunFam" id="2.40.30.160:FF:000001">
    <property type="entry name" value="tRNA-modifying protein YgfZ"/>
    <property type="match status" value="1"/>
</dbReference>
<dbReference type="FunFam" id="3.30.70.1400:FF:000002">
    <property type="entry name" value="tRNA-modifying protein YgfZ"/>
    <property type="match status" value="1"/>
</dbReference>
<dbReference type="FunFam" id="3.30.70.1630:FF:000001">
    <property type="entry name" value="tRNA-modifying protein YgfZ"/>
    <property type="match status" value="1"/>
</dbReference>
<dbReference type="Gene3D" id="2.40.30.160">
    <property type="match status" value="1"/>
</dbReference>
<dbReference type="Gene3D" id="3.30.70.1630">
    <property type="match status" value="1"/>
</dbReference>
<dbReference type="Gene3D" id="3.30.70.1400">
    <property type="entry name" value="Aminomethyltransferase beta-barrel domains"/>
    <property type="match status" value="1"/>
</dbReference>
<dbReference type="HAMAP" id="MF_01175">
    <property type="entry name" value="tRNA_modifying_YgfZ"/>
    <property type="match status" value="1"/>
</dbReference>
<dbReference type="InterPro" id="IPR006222">
    <property type="entry name" value="GCV_T_N"/>
</dbReference>
<dbReference type="InterPro" id="IPR029043">
    <property type="entry name" value="GcvT/YgfZ_C"/>
</dbReference>
<dbReference type="InterPro" id="IPR023758">
    <property type="entry name" value="tRNA-modifying_YgfZ"/>
</dbReference>
<dbReference type="InterPro" id="IPR045179">
    <property type="entry name" value="YgfZ/GcvT"/>
</dbReference>
<dbReference type="InterPro" id="IPR017703">
    <property type="entry name" value="YgfZ/GcvT_CS"/>
</dbReference>
<dbReference type="InterPro" id="IPR048451">
    <property type="entry name" value="YgfZ_barrel"/>
</dbReference>
<dbReference type="NCBIfam" id="NF007110">
    <property type="entry name" value="PRK09559.1"/>
    <property type="match status" value="1"/>
</dbReference>
<dbReference type="NCBIfam" id="TIGR03317">
    <property type="entry name" value="ygfZ_signature"/>
    <property type="match status" value="1"/>
</dbReference>
<dbReference type="PANTHER" id="PTHR22602">
    <property type="entry name" value="TRANSFERASE CAF17, MITOCHONDRIAL-RELATED"/>
    <property type="match status" value="1"/>
</dbReference>
<dbReference type="PANTHER" id="PTHR22602:SF0">
    <property type="entry name" value="TRANSFERASE CAF17, MITOCHONDRIAL-RELATED"/>
    <property type="match status" value="1"/>
</dbReference>
<dbReference type="Pfam" id="PF01571">
    <property type="entry name" value="GCV_T"/>
    <property type="match status" value="1"/>
</dbReference>
<dbReference type="Pfam" id="PF21130">
    <property type="entry name" value="YgfZ_barrel"/>
    <property type="match status" value="1"/>
</dbReference>
<dbReference type="SUPFAM" id="SSF101790">
    <property type="entry name" value="Aminomethyltransferase beta-barrel domain"/>
    <property type="match status" value="1"/>
</dbReference>
<dbReference type="SUPFAM" id="SSF103025">
    <property type="entry name" value="Folate-binding domain"/>
    <property type="match status" value="1"/>
</dbReference>
<accession>Q31WG0</accession>